<feature type="chain" id="PRO_0000084323" description="Probable serine hydrolase">
    <location>
        <begin position="1"/>
        <end position="331"/>
    </location>
</feature>
<feature type="domain" description="AB hydrolase-1" evidence="2">
    <location>
        <begin position="63"/>
        <end position="163"/>
    </location>
</feature>
<feature type="region of interest" description="Disordered" evidence="3">
    <location>
        <begin position="1"/>
        <end position="28"/>
    </location>
</feature>
<feature type="compositionally biased region" description="Low complexity" evidence="3">
    <location>
        <begin position="7"/>
        <end position="17"/>
    </location>
</feature>
<feature type="active site" evidence="1">
    <location>
        <position position="138"/>
    </location>
</feature>
<sequence length="331" mass="37094">MGQTRVAATTAAQSPAAELSPETNGQTEEPLQLLGEDSWEEFSIAVPWGTVEAKWWGSKERQPIIALHGWQDNCGSFDRLCPLLPADTSILAIDLPGHGKSSHYPMGMQYFIFWDGICLIRRIVRKYNWKNVTLLGHSLGGALTFMYAASFPTEVEKLINIDIAGPTVRGTQRMAEGTGRALDKFLDYETLPESKQPCYSYDEMIKLVLDAYDGSVDEPSVRVLMNRGMRHNPSKNGYLFARDLRLKVSLLGMFTAEQTLAYARQIRCRVLNIRGIPGMKFETPQVYADVIATLRENAAKVVYVEVPGTHHLHLVTPDRVAPHIIRFLKEA</sequence>
<gene>
    <name type="primary">kraken</name>
    <name type="ORF">CG3943</name>
</gene>
<proteinExistence type="evidence at transcript level"/>
<evidence type="ECO:0000250" key="1"/>
<evidence type="ECO:0000255" key="2"/>
<evidence type="ECO:0000256" key="3">
    <source>
        <dbReference type="SAM" id="MobiDB-lite"/>
    </source>
</evidence>
<evidence type="ECO:0000305" key="4"/>
<organism>
    <name type="scientific">Drosophila melanogaster</name>
    <name type="common">Fruit fly</name>
    <dbReference type="NCBI Taxonomy" id="7227"/>
    <lineage>
        <taxon>Eukaryota</taxon>
        <taxon>Metazoa</taxon>
        <taxon>Ecdysozoa</taxon>
        <taxon>Arthropoda</taxon>
        <taxon>Hexapoda</taxon>
        <taxon>Insecta</taxon>
        <taxon>Pterygota</taxon>
        <taxon>Neoptera</taxon>
        <taxon>Endopterygota</taxon>
        <taxon>Diptera</taxon>
        <taxon>Brachycera</taxon>
        <taxon>Muscomorpha</taxon>
        <taxon>Ephydroidea</taxon>
        <taxon>Drosophilidae</taxon>
        <taxon>Drosophila</taxon>
        <taxon>Sophophora</taxon>
    </lineage>
</organism>
<protein>
    <recommendedName>
        <fullName>Probable serine hydrolase</fullName>
        <ecNumber>3.1.-.-</ecNumber>
    </recommendedName>
    <alternativeName>
        <fullName>Kraken protein</fullName>
    </alternativeName>
</protein>
<dbReference type="EC" id="3.1.-.-"/>
<dbReference type="EMBL" id="AJ000516">
    <property type="protein sequence ID" value="CAA04153.1"/>
    <property type="molecule type" value="Genomic_DNA"/>
</dbReference>
<dbReference type="EMBL" id="AE014134">
    <property type="protein sequence ID" value="AAF51445.1"/>
    <property type="molecule type" value="Genomic_DNA"/>
</dbReference>
<dbReference type="EMBL" id="AY095092">
    <property type="protein sequence ID" value="AAM11420.1"/>
    <property type="molecule type" value="mRNA"/>
</dbReference>
<dbReference type="EMBL" id="AY118303">
    <property type="protein sequence ID" value="AAM48332.1"/>
    <property type="molecule type" value="mRNA"/>
</dbReference>
<dbReference type="RefSeq" id="NP_001259847.1">
    <property type="nucleotide sequence ID" value="NM_001272918.1"/>
</dbReference>
<dbReference type="RefSeq" id="NP_477265.1">
    <property type="nucleotide sequence ID" value="NM_057917.4"/>
</dbReference>
<dbReference type="SMR" id="O18391"/>
<dbReference type="FunCoup" id="O18391">
    <property type="interactions" value="120"/>
</dbReference>
<dbReference type="ESTHER" id="drome-KRAKEN">
    <property type="family name" value="SERHL"/>
</dbReference>
<dbReference type="MEROPS" id="S33.A81"/>
<dbReference type="PaxDb" id="7227-FBpp0077681"/>
<dbReference type="DNASU" id="33265"/>
<dbReference type="EnsemblMetazoa" id="FBtr0078016">
    <property type="protein sequence ID" value="FBpp0077681"/>
    <property type="gene ID" value="FBgn0020545"/>
</dbReference>
<dbReference type="EnsemblMetazoa" id="FBtr0334794">
    <property type="protein sequence ID" value="FBpp0306841"/>
    <property type="gene ID" value="FBgn0020545"/>
</dbReference>
<dbReference type="GeneID" id="33265"/>
<dbReference type="KEGG" id="dme:Dmel_CG3943"/>
<dbReference type="UCSC" id="CG3943-RA">
    <property type="organism name" value="d. melanogaster"/>
</dbReference>
<dbReference type="AGR" id="FB:FBgn0020545"/>
<dbReference type="CTD" id="33265"/>
<dbReference type="FlyBase" id="FBgn0020545">
    <property type="gene designation" value="kraken"/>
</dbReference>
<dbReference type="VEuPathDB" id="VectorBase:FBgn0020545"/>
<dbReference type="eggNOG" id="KOG1454">
    <property type="taxonomic scope" value="Eukaryota"/>
</dbReference>
<dbReference type="GeneTree" id="ENSGT00510000047225"/>
<dbReference type="HOGENOM" id="CLU_020336_8_1_1"/>
<dbReference type="InParanoid" id="O18391"/>
<dbReference type="OMA" id="HGWMDVS"/>
<dbReference type="OrthoDB" id="190201at2759"/>
<dbReference type="PhylomeDB" id="O18391"/>
<dbReference type="BioGRID-ORCS" id="33265">
    <property type="hits" value="0 hits in 3 CRISPR screens"/>
</dbReference>
<dbReference type="ChiTaRS" id="kraken">
    <property type="organism name" value="fly"/>
</dbReference>
<dbReference type="GenomeRNAi" id="33265"/>
<dbReference type="PRO" id="PR:O18391"/>
<dbReference type="Proteomes" id="UP000000803">
    <property type="component" value="Chromosome 2L"/>
</dbReference>
<dbReference type="Bgee" id="FBgn0020545">
    <property type="expression patterns" value="Expressed in adult posterior midgut class II enteroendocrine cell in adult midgut (Drosophila) and 226 other cell types or tissues"/>
</dbReference>
<dbReference type="ExpressionAtlas" id="O18391">
    <property type="expression patterns" value="baseline and differential"/>
</dbReference>
<dbReference type="GO" id="GO:0052689">
    <property type="term" value="F:carboxylic ester hydrolase activity"/>
    <property type="evidence" value="ECO:0007669"/>
    <property type="project" value="UniProtKB-KW"/>
</dbReference>
<dbReference type="GO" id="GO:0016787">
    <property type="term" value="F:hydrolase activity"/>
    <property type="evidence" value="ECO:0000318"/>
    <property type="project" value="GO_Central"/>
</dbReference>
<dbReference type="GO" id="GO:0017171">
    <property type="term" value="F:serine hydrolase activity"/>
    <property type="evidence" value="ECO:0007005"/>
    <property type="project" value="FlyBase"/>
</dbReference>
<dbReference type="GO" id="GO:0007586">
    <property type="term" value="P:digestion"/>
    <property type="evidence" value="ECO:0000270"/>
    <property type="project" value="UniProtKB"/>
</dbReference>
<dbReference type="GO" id="GO:0009636">
    <property type="term" value="P:response to toxic substance"/>
    <property type="evidence" value="ECO:0000270"/>
    <property type="project" value="UniProtKB"/>
</dbReference>
<dbReference type="FunFam" id="3.40.50.1820:FF:000512">
    <property type="entry name" value="Probable serine hydrolase"/>
    <property type="match status" value="1"/>
</dbReference>
<dbReference type="Gene3D" id="3.40.50.1820">
    <property type="entry name" value="alpha/beta hydrolase"/>
    <property type="match status" value="1"/>
</dbReference>
<dbReference type="InterPro" id="IPR000073">
    <property type="entry name" value="AB_hydrolase_1"/>
</dbReference>
<dbReference type="InterPro" id="IPR029058">
    <property type="entry name" value="AB_hydrolase_fold"/>
</dbReference>
<dbReference type="InterPro" id="IPR050266">
    <property type="entry name" value="AB_hydrolase_sf"/>
</dbReference>
<dbReference type="PANTHER" id="PTHR43798">
    <property type="entry name" value="MONOACYLGLYCEROL LIPASE"/>
    <property type="match status" value="1"/>
</dbReference>
<dbReference type="PANTHER" id="PTHR43798:SF14">
    <property type="entry name" value="SERINE HYDROLASE-LIKE PROTEIN DDB_G0286239"/>
    <property type="match status" value="1"/>
</dbReference>
<dbReference type="Pfam" id="PF00561">
    <property type="entry name" value="Abhydrolase_1"/>
    <property type="match status" value="1"/>
</dbReference>
<dbReference type="PRINTS" id="PR00111">
    <property type="entry name" value="ABHYDROLASE"/>
</dbReference>
<dbReference type="SUPFAM" id="SSF53474">
    <property type="entry name" value="alpha/beta-Hydrolases"/>
    <property type="match status" value="1"/>
</dbReference>
<dbReference type="PROSITE" id="PS00120">
    <property type="entry name" value="LIPASE_SER"/>
    <property type="match status" value="1"/>
</dbReference>
<keyword id="KW-0216">Detoxification</keyword>
<keyword id="KW-0217">Developmental protein</keyword>
<keyword id="KW-0222">Digestion</keyword>
<keyword id="KW-0378">Hydrolase</keyword>
<keyword id="KW-1185">Reference proteome</keyword>
<keyword id="KW-0719">Serine esterase</keyword>
<comment type="function">
    <text>May have a role in detoxification and digestion during embryogenesis and larval development.</text>
</comment>
<comment type="tissue specificity">
    <text>Ubiquitously expressed before embryonic stage 11. At stage 11, expression is concentrated in the foregut and posterior midgut. By stage 15, in gastric caeca, pharynx, posterior spiracles and anterior edge of midgut. At the end of embryogenesis, expression is confined to gastric caeca. During third instar larvae, expressed at low levels in gastric caeca, midgut and hindgut and high level in fat body.</text>
</comment>
<comment type="developmental stage">
    <text>Probably expressed both maternally and zygotically.</text>
</comment>
<comment type="similarity">
    <text evidence="4">Belongs to the AB hydrolase superfamily.</text>
</comment>
<reference evidence="4" key="1">
    <citation type="journal article" date="1998" name="Gene">
        <title>Identification and characterization of kraken, a gene encoding a putative hydrolytic enzyme in Drosophila melanogaster.</title>
        <authorList>
            <person name="Chan H.Y.E."/>
            <person name="Harris S.J."/>
            <person name="O'Kane C.J."/>
        </authorList>
    </citation>
    <scope>NUCLEOTIDE SEQUENCE [GENOMIC DNA]</scope>
    <source>
        <tissue>Embryo</tissue>
    </source>
</reference>
<reference evidence="4" key="2">
    <citation type="journal article" date="2000" name="Science">
        <title>The genome sequence of Drosophila melanogaster.</title>
        <authorList>
            <person name="Adams M.D."/>
            <person name="Celniker S.E."/>
            <person name="Holt R.A."/>
            <person name="Evans C.A."/>
            <person name="Gocayne J.D."/>
            <person name="Amanatides P.G."/>
            <person name="Scherer S.E."/>
            <person name="Li P.W."/>
            <person name="Hoskins R.A."/>
            <person name="Galle R.F."/>
            <person name="George R.A."/>
            <person name="Lewis S.E."/>
            <person name="Richards S."/>
            <person name="Ashburner M."/>
            <person name="Henderson S.N."/>
            <person name="Sutton G.G."/>
            <person name="Wortman J.R."/>
            <person name="Yandell M.D."/>
            <person name="Zhang Q."/>
            <person name="Chen L.X."/>
            <person name="Brandon R.C."/>
            <person name="Rogers Y.-H.C."/>
            <person name="Blazej R.G."/>
            <person name="Champe M."/>
            <person name="Pfeiffer B.D."/>
            <person name="Wan K.H."/>
            <person name="Doyle C."/>
            <person name="Baxter E.G."/>
            <person name="Helt G."/>
            <person name="Nelson C.R."/>
            <person name="Miklos G.L.G."/>
            <person name="Abril J.F."/>
            <person name="Agbayani A."/>
            <person name="An H.-J."/>
            <person name="Andrews-Pfannkoch C."/>
            <person name="Baldwin D."/>
            <person name="Ballew R.M."/>
            <person name="Basu A."/>
            <person name="Baxendale J."/>
            <person name="Bayraktaroglu L."/>
            <person name="Beasley E.M."/>
            <person name="Beeson K.Y."/>
            <person name="Benos P.V."/>
            <person name="Berman B.P."/>
            <person name="Bhandari D."/>
            <person name="Bolshakov S."/>
            <person name="Borkova D."/>
            <person name="Botchan M.R."/>
            <person name="Bouck J."/>
            <person name="Brokstein P."/>
            <person name="Brottier P."/>
            <person name="Burtis K.C."/>
            <person name="Busam D.A."/>
            <person name="Butler H."/>
            <person name="Cadieu E."/>
            <person name="Center A."/>
            <person name="Chandra I."/>
            <person name="Cherry J.M."/>
            <person name="Cawley S."/>
            <person name="Dahlke C."/>
            <person name="Davenport L.B."/>
            <person name="Davies P."/>
            <person name="de Pablos B."/>
            <person name="Delcher A."/>
            <person name="Deng Z."/>
            <person name="Mays A.D."/>
            <person name="Dew I."/>
            <person name="Dietz S.M."/>
            <person name="Dodson K."/>
            <person name="Doup L.E."/>
            <person name="Downes M."/>
            <person name="Dugan-Rocha S."/>
            <person name="Dunkov B.C."/>
            <person name="Dunn P."/>
            <person name="Durbin K.J."/>
            <person name="Evangelista C.C."/>
            <person name="Ferraz C."/>
            <person name="Ferriera S."/>
            <person name="Fleischmann W."/>
            <person name="Fosler C."/>
            <person name="Gabrielian A.E."/>
            <person name="Garg N.S."/>
            <person name="Gelbart W.M."/>
            <person name="Glasser K."/>
            <person name="Glodek A."/>
            <person name="Gong F."/>
            <person name="Gorrell J.H."/>
            <person name="Gu Z."/>
            <person name="Guan P."/>
            <person name="Harris M."/>
            <person name="Harris N.L."/>
            <person name="Harvey D.A."/>
            <person name="Heiman T.J."/>
            <person name="Hernandez J.R."/>
            <person name="Houck J."/>
            <person name="Hostin D."/>
            <person name="Houston K.A."/>
            <person name="Howland T.J."/>
            <person name="Wei M.-H."/>
            <person name="Ibegwam C."/>
            <person name="Jalali M."/>
            <person name="Kalush F."/>
            <person name="Karpen G.H."/>
            <person name="Ke Z."/>
            <person name="Kennison J.A."/>
            <person name="Ketchum K.A."/>
            <person name="Kimmel B.E."/>
            <person name="Kodira C.D."/>
            <person name="Kraft C.L."/>
            <person name="Kravitz S."/>
            <person name="Kulp D."/>
            <person name="Lai Z."/>
            <person name="Lasko P."/>
            <person name="Lei Y."/>
            <person name="Levitsky A.A."/>
            <person name="Li J.H."/>
            <person name="Li Z."/>
            <person name="Liang Y."/>
            <person name="Lin X."/>
            <person name="Liu X."/>
            <person name="Mattei B."/>
            <person name="McIntosh T.C."/>
            <person name="McLeod M.P."/>
            <person name="McPherson D."/>
            <person name="Merkulov G."/>
            <person name="Milshina N.V."/>
            <person name="Mobarry C."/>
            <person name="Morris J."/>
            <person name="Moshrefi A."/>
            <person name="Mount S.M."/>
            <person name="Moy M."/>
            <person name="Murphy B."/>
            <person name="Murphy L."/>
            <person name="Muzny D.M."/>
            <person name="Nelson D.L."/>
            <person name="Nelson D.R."/>
            <person name="Nelson K.A."/>
            <person name="Nixon K."/>
            <person name="Nusskern D.R."/>
            <person name="Pacleb J.M."/>
            <person name="Palazzolo M."/>
            <person name="Pittman G.S."/>
            <person name="Pan S."/>
            <person name="Pollard J."/>
            <person name="Puri V."/>
            <person name="Reese M.G."/>
            <person name="Reinert K."/>
            <person name="Remington K."/>
            <person name="Saunders R.D.C."/>
            <person name="Scheeler F."/>
            <person name="Shen H."/>
            <person name="Shue B.C."/>
            <person name="Siden-Kiamos I."/>
            <person name="Simpson M."/>
            <person name="Skupski M.P."/>
            <person name="Smith T.J."/>
            <person name="Spier E."/>
            <person name="Spradling A.C."/>
            <person name="Stapleton M."/>
            <person name="Strong R."/>
            <person name="Sun E."/>
            <person name="Svirskas R."/>
            <person name="Tector C."/>
            <person name="Turner R."/>
            <person name="Venter E."/>
            <person name="Wang A.H."/>
            <person name="Wang X."/>
            <person name="Wang Z.-Y."/>
            <person name="Wassarman D.A."/>
            <person name="Weinstock G.M."/>
            <person name="Weissenbach J."/>
            <person name="Williams S.M."/>
            <person name="Woodage T."/>
            <person name="Worley K.C."/>
            <person name="Wu D."/>
            <person name="Yang S."/>
            <person name="Yao Q.A."/>
            <person name="Ye J."/>
            <person name="Yeh R.-F."/>
            <person name="Zaveri J.S."/>
            <person name="Zhan M."/>
            <person name="Zhang G."/>
            <person name="Zhao Q."/>
            <person name="Zheng L."/>
            <person name="Zheng X.H."/>
            <person name="Zhong F.N."/>
            <person name="Zhong W."/>
            <person name="Zhou X."/>
            <person name="Zhu S.C."/>
            <person name="Zhu X."/>
            <person name="Smith H.O."/>
            <person name="Gibbs R.A."/>
            <person name="Myers E.W."/>
            <person name="Rubin G.M."/>
            <person name="Venter J.C."/>
        </authorList>
    </citation>
    <scope>NUCLEOTIDE SEQUENCE [LARGE SCALE GENOMIC DNA]</scope>
    <source>
        <strain>Berkeley</strain>
    </source>
</reference>
<reference key="3">
    <citation type="journal article" date="2002" name="Genome Biol.">
        <title>Annotation of the Drosophila melanogaster euchromatic genome: a systematic review.</title>
        <authorList>
            <person name="Misra S."/>
            <person name="Crosby M.A."/>
            <person name="Mungall C.J."/>
            <person name="Matthews B.B."/>
            <person name="Campbell K.S."/>
            <person name="Hradecky P."/>
            <person name="Huang Y."/>
            <person name="Kaminker J.S."/>
            <person name="Millburn G.H."/>
            <person name="Prochnik S.E."/>
            <person name="Smith C.D."/>
            <person name="Tupy J.L."/>
            <person name="Whitfield E.J."/>
            <person name="Bayraktaroglu L."/>
            <person name="Berman B.P."/>
            <person name="Bettencourt B.R."/>
            <person name="Celniker S.E."/>
            <person name="de Grey A.D.N.J."/>
            <person name="Drysdale R.A."/>
            <person name="Harris N.L."/>
            <person name="Richter J."/>
            <person name="Russo S."/>
            <person name="Schroeder A.J."/>
            <person name="Shu S.Q."/>
            <person name="Stapleton M."/>
            <person name="Yamada C."/>
            <person name="Ashburner M."/>
            <person name="Gelbart W.M."/>
            <person name="Rubin G.M."/>
            <person name="Lewis S.E."/>
        </authorList>
    </citation>
    <scope>GENOME REANNOTATION</scope>
    <source>
        <strain>Berkeley</strain>
    </source>
</reference>
<reference key="4">
    <citation type="journal article" date="2002" name="Genome Biol.">
        <title>A Drosophila full-length cDNA resource.</title>
        <authorList>
            <person name="Stapleton M."/>
            <person name="Carlson J.W."/>
            <person name="Brokstein P."/>
            <person name="Yu C."/>
            <person name="Champe M."/>
            <person name="George R.A."/>
            <person name="Guarin H."/>
            <person name="Kronmiller B."/>
            <person name="Pacleb J.M."/>
            <person name="Park S."/>
            <person name="Wan K.H."/>
            <person name="Rubin G.M."/>
            <person name="Celniker S.E."/>
        </authorList>
    </citation>
    <scope>NUCLEOTIDE SEQUENCE [LARGE SCALE MRNA]</scope>
    <source>
        <strain>Berkeley</strain>
        <tissue>Head</tissue>
    </source>
</reference>
<name>KRAK_DROME</name>
<accession>O18391</accession>